<proteinExistence type="inferred from homology"/>
<keyword id="KW-1003">Cell membrane</keyword>
<keyword id="KW-0350">Heme biosynthesis</keyword>
<keyword id="KW-0472">Membrane</keyword>
<keyword id="KW-0808">Transferase</keyword>
<keyword id="KW-0812">Transmembrane</keyword>
<keyword id="KW-1133">Transmembrane helix</keyword>
<feature type="chain" id="PRO_0000327123" description="Protoheme IX farnesyltransferase">
    <location>
        <begin position="1"/>
        <end position="337"/>
    </location>
</feature>
<feature type="transmembrane region" description="Helical" evidence="1">
    <location>
        <begin position="59"/>
        <end position="79"/>
    </location>
</feature>
<feature type="transmembrane region" description="Helical" evidence="1">
    <location>
        <begin position="81"/>
        <end position="101"/>
    </location>
</feature>
<feature type="transmembrane region" description="Helical" evidence="1">
    <location>
        <begin position="130"/>
        <end position="150"/>
    </location>
</feature>
<feature type="transmembrane region" description="Helical" evidence="1">
    <location>
        <begin position="153"/>
        <end position="173"/>
    </location>
</feature>
<feature type="transmembrane region" description="Helical" evidence="1">
    <location>
        <begin position="196"/>
        <end position="216"/>
    </location>
</feature>
<feature type="transmembrane region" description="Helical" evidence="1">
    <location>
        <begin position="250"/>
        <end position="270"/>
    </location>
</feature>
<feature type="transmembrane region" description="Helical" evidence="1">
    <location>
        <begin position="271"/>
        <end position="291"/>
    </location>
</feature>
<feature type="transmembrane region" description="Helical" evidence="1">
    <location>
        <begin position="311"/>
        <end position="331"/>
    </location>
</feature>
<feature type="region of interest" description="Disordered" evidence="2">
    <location>
        <begin position="1"/>
        <end position="41"/>
    </location>
</feature>
<feature type="compositionally biased region" description="Polar residues" evidence="2">
    <location>
        <begin position="1"/>
        <end position="17"/>
    </location>
</feature>
<feature type="compositionally biased region" description="Basic and acidic residues" evidence="2">
    <location>
        <begin position="27"/>
        <end position="41"/>
    </location>
</feature>
<accession>Q6A7G0</accession>
<gene>
    <name evidence="1" type="primary">ctaB</name>
    <name type="ordered locus">PPA1561</name>
</gene>
<evidence type="ECO:0000255" key="1">
    <source>
        <dbReference type="HAMAP-Rule" id="MF_00154"/>
    </source>
</evidence>
<evidence type="ECO:0000256" key="2">
    <source>
        <dbReference type="SAM" id="MobiDB-lite"/>
    </source>
</evidence>
<evidence type="ECO:0000305" key="3"/>
<sequence>MPFSISKDTVSNQTTHVATAPASQRPDPVETKVEQEQGRPRLSSRDVVHAYVALTKPRIIELLLVTTLPVMFLASHGVPKLGLVIATMVGGLFAAASANVFNCVIDVDIDQKMRRTRRRPLPRHQVPRRSALIYGIILWIIATIILGFGANWLSAALALIANLFYVFVYSMLLKRRTWQNTIWGGIAGCFPPLIGWTAVTGSVGWEPLVLFFIVFWWTPPHTWALSFRYREDYEAAGVPMLPVVRDAPEVAIQILIYTVMTVAISLVLWPVAHMGWIYVVVAVVSGAVFIVEAAQLLRRANAGLRDALLKPMGLFHWSNTYLSLLFLAIAVDPLIHL</sequence>
<protein>
    <recommendedName>
        <fullName evidence="1">Protoheme IX farnesyltransferase</fullName>
        <ecNumber evidence="1">2.5.1.141</ecNumber>
    </recommendedName>
    <alternativeName>
        <fullName evidence="1">Heme B farnesyltransferase</fullName>
    </alternativeName>
    <alternativeName>
        <fullName evidence="1">Heme O synthase</fullName>
    </alternativeName>
</protein>
<organism>
    <name type="scientific">Cutibacterium acnes (strain DSM 16379 / KPA171202)</name>
    <name type="common">Propionibacterium acnes</name>
    <dbReference type="NCBI Taxonomy" id="267747"/>
    <lineage>
        <taxon>Bacteria</taxon>
        <taxon>Bacillati</taxon>
        <taxon>Actinomycetota</taxon>
        <taxon>Actinomycetes</taxon>
        <taxon>Propionibacteriales</taxon>
        <taxon>Propionibacteriaceae</taxon>
        <taxon>Cutibacterium</taxon>
    </lineage>
</organism>
<comment type="function">
    <text evidence="1">Converts heme B (protoheme IX) to heme O by substitution of the vinyl group on carbon 2 of heme B porphyrin ring with a hydroxyethyl farnesyl side group.</text>
</comment>
<comment type="catalytic activity">
    <reaction evidence="1">
        <text>heme b + (2E,6E)-farnesyl diphosphate + H2O = Fe(II)-heme o + diphosphate</text>
        <dbReference type="Rhea" id="RHEA:28070"/>
        <dbReference type="ChEBI" id="CHEBI:15377"/>
        <dbReference type="ChEBI" id="CHEBI:33019"/>
        <dbReference type="ChEBI" id="CHEBI:60344"/>
        <dbReference type="ChEBI" id="CHEBI:60530"/>
        <dbReference type="ChEBI" id="CHEBI:175763"/>
        <dbReference type="EC" id="2.5.1.141"/>
    </reaction>
</comment>
<comment type="pathway">
    <text evidence="1">Porphyrin-containing compound metabolism; heme O biosynthesis; heme O from protoheme: step 1/1.</text>
</comment>
<comment type="subcellular location">
    <subcellularLocation>
        <location evidence="1">Cell membrane</location>
        <topology evidence="1">Multi-pass membrane protein</topology>
    </subcellularLocation>
</comment>
<comment type="miscellaneous">
    <text evidence="1">Carbon 2 of the heme B porphyrin ring is defined according to the Fischer nomenclature.</text>
</comment>
<comment type="similarity">
    <text evidence="1">Belongs to the UbiA prenyltransferase family. Protoheme IX farnesyltransferase subfamily.</text>
</comment>
<comment type="sequence caution" evidence="3">
    <conflict type="erroneous initiation">
        <sequence resource="EMBL-CDS" id="AAT83305"/>
    </conflict>
</comment>
<name>COXX_CUTAK</name>
<reference key="1">
    <citation type="journal article" date="2004" name="Science">
        <title>The complete genome sequence of Propionibacterium acnes, a commensal of human skin.</title>
        <authorList>
            <person name="Brueggemann H."/>
            <person name="Henne A."/>
            <person name="Hoster F."/>
            <person name="Liesegang H."/>
            <person name="Wiezer A."/>
            <person name="Strittmatter A."/>
            <person name="Hujer S."/>
            <person name="Duerre P."/>
            <person name="Gottschalk G."/>
        </authorList>
    </citation>
    <scope>NUCLEOTIDE SEQUENCE [LARGE SCALE GENOMIC DNA]</scope>
    <source>
        <strain>DSM 16379 / KPA171202</strain>
    </source>
</reference>
<dbReference type="EC" id="2.5.1.141" evidence="1"/>
<dbReference type="EMBL" id="AE017283">
    <property type="protein sequence ID" value="AAT83305.1"/>
    <property type="status" value="ALT_INIT"/>
    <property type="molecule type" value="Genomic_DNA"/>
</dbReference>
<dbReference type="RefSeq" id="WP_002521394.1">
    <property type="nucleotide sequence ID" value="NZ_CP025935.1"/>
</dbReference>
<dbReference type="SMR" id="Q6A7G0"/>
<dbReference type="EnsemblBacteria" id="AAT83305">
    <property type="protein sequence ID" value="AAT83305"/>
    <property type="gene ID" value="PPA1561"/>
</dbReference>
<dbReference type="KEGG" id="pac:PPA1561"/>
<dbReference type="eggNOG" id="COG0109">
    <property type="taxonomic scope" value="Bacteria"/>
</dbReference>
<dbReference type="HOGENOM" id="CLU_029631_0_1_11"/>
<dbReference type="UniPathway" id="UPA00834">
    <property type="reaction ID" value="UER00712"/>
</dbReference>
<dbReference type="Proteomes" id="UP000000603">
    <property type="component" value="Chromosome"/>
</dbReference>
<dbReference type="GO" id="GO:0005886">
    <property type="term" value="C:plasma membrane"/>
    <property type="evidence" value="ECO:0007669"/>
    <property type="project" value="UniProtKB-SubCell"/>
</dbReference>
<dbReference type="GO" id="GO:0008495">
    <property type="term" value="F:protoheme IX farnesyltransferase activity"/>
    <property type="evidence" value="ECO:0007669"/>
    <property type="project" value="UniProtKB-UniRule"/>
</dbReference>
<dbReference type="GO" id="GO:0048034">
    <property type="term" value="P:heme O biosynthetic process"/>
    <property type="evidence" value="ECO:0007669"/>
    <property type="project" value="UniProtKB-UniRule"/>
</dbReference>
<dbReference type="CDD" id="cd13957">
    <property type="entry name" value="PT_UbiA_Cox10"/>
    <property type="match status" value="1"/>
</dbReference>
<dbReference type="FunFam" id="1.10.357.140:FF:000001">
    <property type="entry name" value="Protoheme IX farnesyltransferase"/>
    <property type="match status" value="1"/>
</dbReference>
<dbReference type="Gene3D" id="1.10.357.140">
    <property type="entry name" value="UbiA prenyltransferase"/>
    <property type="match status" value="1"/>
</dbReference>
<dbReference type="HAMAP" id="MF_00154">
    <property type="entry name" value="CyoE_CtaB"/>
    <property type="match status" value="1"/>
</dbReference>
<dbReference type="InterPro" id="IPR006369">
    <property type="entry name" value="Protohaem_IX_farnesylTrfase"/>
</dbReference>
<dbReference type="InterPro" id="IPR000537">
    <property type="entry name" value="UbiA_prenyltransferase"/>
</dbReference>
<dbReference type="InterPro" id="IPR044878">
    <property type="entry name" value="UbiA_sf"/>
</dbReference>
<dbReference type="NCBIfam" id="TIGR01473">
    <property type="entry name" value="cyoE_ctaB"/>
    <property type="match status" value="1"/>
</dbReference>
<dbReference type="NCBIfam" id="NF003349">
    <property type="entry name" value="PRK04375.1-2"/>
    <property type="match status" value="1"/>
</dbReference>
<dbReference type="PANTHER" id="PTHR43448:SF7">
    <property type="entry name" value="4-HYDROXYBENZOATE SOLANESYLTRANSFERASE"/>
    <property type="match status" value="1"/>
</dbReference>
<dbReference type="PANTHER" id="PTHR43448">
    <property type="entry name" value="PROTOHEME IX FARNESYLTRANSFERASE, MITOCHONDRIAL"/>
    <property type="match status" value="1"/>
</dbReference>
<dbReference type="Pfam" id="PF01040">
    <property type="entry name" value="UbiA"/>
    <property type="match status" value="1"/>
</dbReference>